<comment type="function">
    <text evidence="1">Component of the SOS system and an inhibitor of cell division. Accumulation of SulA causes rapid cessation of cell division and the appearance of long, non-septate filaments. In the presence of GTP, binds a polymerization-competent form of FtsZ in a 1:1 ratio, thus inhibiting FtsZ polymerization and therefore preventing it from participating in the assembly of the Z ring. This mechanism prevents the premature segregation of damaged DNA to daughter cells during cell division.</text>
</comment>
<comment type="subunit">
    <text evidence="1">Interacts with FtsZ.</text>
</comment>
<comment type="induction">
    <text evidence="1">By DNA damage, as part of the SOS response.</text>
</comment>
<comment type="PTM">
    <text evidence="1">Is rapidly cleaved and degraded by the Lon protease once DNA damage is repaired.</text>
</comment>
<comment type="similarity">
    <text evidence="1">Belongs to the SulA family.</text>
</comment>
<sequence length="169" mass="19003">MYTSGYANRSSSFPTTTHNAARTATENAAAGLVSEVVYHEDQPMMAQLLLLPLLRQLGQQSRWQLWLTPQQKLSREWVQSSGLPLTKVMQISQLAPRHTLESMIRALRTGNYSVVIGWMTEELTEEEHASLVEAAKVGNAVGFIMRPVRAHALSRRQHSGLKIHSNLYH</sequence>
<evidence type="ECO:0000255" key="1">
    <source>
        <dbReference type="HAMAP-Rule" id="MF_01179"/>
    </source>
</evidence>
<protein>
    <recommendedName>
        <fullName evidence="1">Cell division inhibitor SulA</fullName>
    </recommendedName>
</protein>
<dbReference type="EMBL" id="AM933172">
    <property type="protein sequence ID" value="CAR32519.1"/>
    <property type="molecule type" value="Genomic_DNA"/>
</dbReference>
<dbReference type="RefSeq" id="WP_000288733.1">
    <property type="nucleotide sequence ID" value="NC_011294.1"/>
</dbReference>
<dbReference type="SMR" id="B5QZG1"/>
<dbReference type="KEGG" id="set:SEN0936"/>
<dbReference type="HOGENOM" id="CLU_118972_1_0_6"/>
<dbReference type="Proteomes" id="UP000000613">
    <property type="component" value="Chromosome"/>
</dbReference>
<dbReference type="GO" id="GO:0000917">
    <property type="term" value="P:division septum assembly"/>
    <property type="evidence" value="ECO:0007669"/>
    <property type="project" value="UniProtKB-KW"/>
</dbReference>
<dbReference type="GO" id="GO:0006281">
    <property type="term" value="P:DNA repair"/>
    <property type="evidence" value="ECO:0007669"/>
    <property type="project" value="TreeGrafter"/>
</dbReference>
<dbReference type="GO" id="GO:0051782">
    <property type="term" value="P:negative regulation of cell division"/>
    <property type="evidence" value="ECO:0007669"/>
    <property type="project" value="UniProtKB-UniRule"/>
</dbReference>
<dbReference type="GO" id="GO:0009432">
    <property type="term" value="P:SOS response"/>
    <property type="evidence" value="ECO:0007669"/>
    <property type="project" value="UniProtKB-UniRule"/>
</dbReference>
<dbReference type="FunFam" id="3.40.50.300:FF:000417">
    <property type="entry name" value="Cell division inhibitor SulA"/>
    <property type="match status" value="1"/>
</dbReference>
<dbReference type="Gene3D" id="3.40.50.300">
    <property type="entry name" value="P-loop containing nucleotide triphosphate hydrolases"/>
    <property type="match status" value="1"/>
</dbReference>
<dbReference type="HAMAP" id="MF_01179">
    <property type="entry name" value="SulA"/>
    <property type="match status" value="1"/>
</dbReference>
<dbReference type="InterPro" id="IPR004596">
    <property type="entry name" value="Cell_div_suppressor_SulA"/>
</dbReference>
<dbReference type="InterPro" id="IPR027417">
    <property type="entry name" value="P-loop_NTPase"/>
</dbReference>
<dbReference type="InterPro" id="IPR050356">
    <property type="entry name" value="SulA_CellDiv_inhibitor"/>
</dbReference>
<dbReference type="InterPro" id="IPR047696">
    <property type="entry name" value="SulA_enterobact"/>
</dbReference>
<dbReference type="NCBIfam" id="NF007892">
    <property type="entry name" value="PRK10595.1"/>
    <property type="match status" value="1"/>
</dbReference>
<dbReference type="NCBIfam" id="TIGR00623">
    <property type="entry name" value="SOS_SulA_coli"/>
    <property type="match status" value="1"/>
</dbReference>
<dbReference type="PANTHER" id="PTHR35369">
    <property type="entry name" value="BLR3025 PROTEIN-RELATED"/>
    <property type="match status" value="1"/>
</dbReference>
<dbReference type="PANTHER" id="PTHR35369:SF4">
    <property type="entry name" value="CELL DIVISION INHIBITOR SULA"/>
    <property type="match status" value="1"/>
</dbReference>
<dbReference type="Pfam" id="PF03846">
    <property type="entry name" value="SulA"/>
    <property type="match status" value="1"/>
</dbReference>
<dbReference type="PIRSF" id="PIRSF003093">
    <property type="entry name" value="SulA"/>
    <property type="match status" value="1"/>
</dbReference>
<dbReference type="SUPFAM" id="SSF52540">
    <property type="entry name" value="P-loop containing nucleoside triphosphate hydrolases"/>
    <property type="match status" value="1"/>
</dbReference>
<proteinExistence type="inferred from homology"/>
<accession>B5QZG1</accession>
<keyword id="KW-0131">Cell cycle</keyword>
<keyword id="KW-0132">Cell division</keyword>
<keyword id="KW-0227">DNA damage</keyword>
<keyword id="KW-0717">Septation</keyword>
<keyword id="KW-0742">SOS response</keyword>
<gene>
    <name evidence="1" type="primary">sulA</name>
    <name type="ordered locus">SEN0936</name>
</gene>
<organism>
    <name type="scientific">Salmonella enteritidis PT4 (strain P125109)</name>
    <dbReference type="NCBI Taxonomy" id="550537"/>
    <lineage>
        <taxon>Bacteria</taxon>
        <taxon>Pseudomonadati</taxon>
        <taxon>Pseudomonadota</taxon>
        <taxon>Gammaproteobacteria</taxon>
        <taxon>Enterobacterales</taxon>
        <taxon>Enterobacteriaceae</taxon>
        <taxon>Salmonella</taxon>
    </lineage>
</organism>
<feature type="chain" id="PRO_1000138166" description="Cell division inhibitor SulA">
    <location>
        <begin position="1"/>
        <end position="169"/>
    </location>
</feature>
<feature type="region of interest" description="FtsZ binding" evidence="1">
    <location>
        <begin position="106"/>
        <end position="112"/>
    </location>
</feature>
<feature type="region of interest" description="Lon protease binding" evidence="1">
    <location>
        <begin position="162"/>
        <end position="169"/>
    </location>
</feature>
<feature type="site" description="Essential for degradation by Lon protease" evidence="1">
    <location>
        <position position="169"/>
    </location>
</feature>
<name>SULA_SALEP</name>
<reference key="1">
    <citation type="journal article" date="2008" name="Genome Res.">
        <title>Comparative genome analysis of Salmonella enteritidis PT4 and Salmonella gallinarum 287/91 provides insights into evolutionary and host adaptation pathways.</title>
        <authorList>
            <person name="Thomson N.R."/>
            <person name="Clayton D.J."/>
            <person name="Windhorst D."/>
            <person name="Vernikos G."/>
            <person name="Davidson S."/>
            <person name="Churcher C."/>
            <person name="Quail M.A."/>
            <person name="Stevens M."/>
            <person name="Jones M.A."/>
            <person name="Watson M."/>
            <person name="Barron A."/>
            <person name="Layton A."/>
            <person name="Pickard D."/>
            <person name="Kingsley R.A."/>
            <person name="Bignell A."/>
            <person name="Clark L."/>
            <person name="Harris B."/>
            <person name="Ormond D."/>
            <person name="Abdellah Z."/>
            <person name="Brooks K."/>
            <person name="Cherevach I."/>
            <person name="Chillingworth T."/>
            <person name="Woodward J."/>
            <person name="Norberczak H."/>
            <person name="Lord A."/>
            <person name="Arrowsmith C."/>
            <person name="Jagels K."/>
            <person name="Moule S."/>
            <person name="Mungall K."/>
            <person name="Saunders M."/>
            <person name="Whitehead S."/>
            <person name="Chabalgoity J.A."/>
            <person name="Maskell D."/>
            <person name="Humphreys T."/>
            <person name="Roberts M."/>
            <person name="Barrow P.A."/>
            <person name="Dougan G."/>
            <person name="Parkhill J."/>
        </authorList>
    </citation>
    <scope>NUCLEOTIDE SEQUENCE [LARGE SCALE GENOMIC DNA]</scope>
    <source>
        <strain>P125109</strain>
    </source>
</reference>